<comment type="function">
    <text>Involved in the sexual cell fusion of D.discoideum.</text>
</comment>
<comment type="subcellular location">
    <subcellularLocation>
        <location>Cell membrane</location>
        <topology>Lipid-anchor</topology>
        <topology>GPI-anchor</topology>
    </subcellularLocation>
</comment>
<comment type="developmental stage">
    <text>Expressed at the time of acquisition of fusion competence of cells.</text>
</comment>
<comment type="PTM">
    <text>The sugar chains may play important roles in cell fusion.</text>
</comment>
<comment type="PTM">
    <text evidence="4">The GPI-like-anchor contains a phosphoceramide group, rather than a phosphatidyl group.</text>
</comment>
<comment type="caution">
    <text evidence="4">The Dictyosteliida are known to produce a glycosylsphingolipidinositol anchor (GPI-like-anchor). It has not been established whether Dictyosteliida make a glycosylphosphatidylinositol anchor (GPI-anchor) also, and whether their GPI-like-anchor modifications can be interconverted with GPI-anchor modifications in a resculpting process. It has not been established that the GPI-like-anchor modification in Dictyosteliida utilizes the same sequence motif.</text>
</comment>
<proteinExistence type="evidence at protein level"/>
<accession>P34116</accession>
<accession>Q54GA3</accession>
<organism>
    <name type="scientific">Dictyostelium discoideum</name>
    <name type="common">Social amoeba</name>
    <dbReference type="NCBI Taxonomy" id="44689"/>
    <lineage>
        <taxon>Eukaryota</taxon>
        <taxon>Amoebozoa</taxon>
        <taxon>Evosea</taxon>
        <taxon>Eumycetozoa</taxon>
        <taxon>Dictyostelia</taxon>
        <taxon>Dictyosteliales</taxon>
        <taxon>Dictyosteliaceae</taxon>
        <taxon>Dictyostelium</taxon>
    </lineage>
</organism>
<dbReference type="EMBL" id="D12884">
    <property type="protein sequence ID" value="BAA02288.1"/>
    <property type="molecule type" value="Genomic_DNA"/>
</dbReference>
<dbReference type="EMBL" id="AAFI02000162">
    <property type="protein sequence ID" value="EAL62256.1"/>
    <property type="molecule type" value="Genomic_DNA"/>
</dbReference>
<dbReference type="RefSeq" id="XP_635780.1">
    <property type="nucleotide sequence ID" value="XM_630688.1"/>
</dbReference>
<dbReference type="SMR" id="P34116"/>
<dbReference type="FunCoup" id="P34116">
    <property type="interactions" value="330"/>
</dbReference>
<dbReference type="GlyCosmos" id="P34116">
    <property type="glycosylation" value="16 sites, No reported glycans"/>
</dbReference>
<dbReference type="GlyGen" id="P34116">
    <property type="glycosylation" value="17 sites"/>
</dbReference>
<dbReference type="PaxDb" id="44689-DDB0191447"/>
<dbReference type="EnsemblProtists" id="EAL62256">
    <property type="protein sequence ID" value="EAL62256"/>
    <property type="gene ID" value="DDB_G0290259"/>
</dbReference>
<dbReference type="GeneID" id="8627585"/>
<dbReference type="KEGG" id="ddi:DDB_G0290259"/>
<dbReference type="dictyBase" id="DDB_G0290259">
    <property type="gene designation" value="cfrB"/>
</dbReference>
<dbReference type="VEuPathDB" id="AmoebaDB:DDB_G0290259"/>
<dbReference type="HOGENOM" id="CLU_022518_0_0_1"/>
<dbReference type="InParanoid" id="P34116"/>
<dbReference type="OMA" id="VECDDIN"/>
<dbReference type="PhylomeDB" id="P34116"/>
<dbReference type="PRO" id="PR:P34116"/>
<dbReference type="Proteomes" id="UP000002195">
    <property type="component" value="Chromosome 5"/>
</dbReference>
<dbReference type="GO" id="GO:0045335">
    <property type="term" value="C:phagocytic vesicle"/>
    <property type="evidence" value="ECO:0000318"/>
    <property type="project" value="GO_Central"/>
</dbReference>
<dbReference type="GO" id="GO:0005886">
    <property type="term" value="C:plasma membrane"/>
    <property type="evidence" value="ECO:0000318"/>
    <property type="project" value="GO_Central"/>
</dbReference>
<dbReference type="GO" id="GO:0098552">
    <property type="term" value="C:side of membrane"/>
    <property type="evidence" value="ECO:0007669"/>
    <property type="project" value="UniProtKB-KW"/>
</dbReference>
<dbReference type="GO" id="GO:0006907">
    <property type="term" value="P:pinocytosis"/>
    <property type="evidence" value="ECO:0000318"/>
    <property type="project" value="GO_Central"/>
</dbReference>
<dbReference type="GO" id="GO:0140084">
    <property type="term" value="P:sexual macrocyst formation"/>
    <property type="evidence" value="ECO:0000316"/>
    <property type="project" value="dictyBase"/>
</dbReference>
<dbReference type="Gene3D" id="3.80.10.10">
    <property type="entry name" value="Ribonuclease Inhibitor"/>
    <property type="match status" value="1"/>
</dbReference>
<dbReference type="InterPro" id="IPR032675">
    <property type="entry name" value="LRR_dom_sf"/>
</dbReference>
<dbReference type="InterPro" id="IPR053133">
    <property type="entry name" value="Sexual_fusion_gp"/>
</dbReference>
<dbReference type="PANTHER" id="PTHR31093">
    <property type="entry name" value="CELL SURFACE GLYCOPROTEIN GP138-RELATED-RELATED"/>
    <property type="match status" value="1"/>
</dbReference>
<dbReference type="PANTHER" id="PTHR31093:SF4">
    <property type="entry name" value="CELL SURFACE GLYCOPROTEIN-RELATED"/>
    <property type="match status" value="1"/>
</dbReference>
<dbReference type="SUPFAM" id="SSF52047">
    <property type="entry name" value="RNI-like"/>
    <property type="match status" value="1"/>
</dbReference>
<reference key="1">
    <citation type="journal article" date="1993" name="Dev. Biol.">
        <title>Molecular cloning and characterization of two genes encoding gp138, a cell surface glycoprotein involved in the sexual cell fusion of Dictyostelium discoideum.</title>
        <authorList>
            <person name="Fang H."/>
            <person name="Higa M."/>
            <person name="Suzuki K."/>
            <person name="Aiba K."/>
            <person name="Urushihara H."/>
            <person name="Yanagisawa K."/>
        </authorList>
    </citation>
    <scope>NUCLEOTIDE SEQUENCE [GENOMIC DNA]</scope>
    <scope>PROTEIN SEQUENCE OF 21-32</scope>
    <source>
        <strain>AX3</strain>
    </source>
</reference>
<reference key="2">
    <citation type="journal article" date="2005" name="Nature">
        <title>The genome of the social amoeba Dictyostelium discoideum.</title>
        <authorList>
            <person name="Eichinger L."/>
            <person name="Pachebat J.A."/>
            <person name="Gloeckner G."/>
            <person name="Rajandream M.A."/>
            <person name="Sucgang R."/>
            <person name="Berriman M."/>
            <person name="Song J."/>
            <person name="Olsen R."/>
            <person name="Szafranski K."/>
            <person name="Xu Q."/>
            <person name="Tunggal B."/>
            <person name="Kummerfeld S."/>
            <person name="Madera M."/>
            <person name="Konfortov B.A."/>
            <person name="Rivero F."/>
            <person name="Bankier A.T."/>
            <person name="Lehmann R."/>
            <person name="Hamlin N."/>
            <person name="Davies R."/>
            <person name="Gaudet P."/>
            <person name="Fey P."/>
            <person name="Pilcher K."/>
            <person name="Chen G."/>
            <person name="Saunders D."/>
            <person name="Sodergren E.J."/>
            <person name="Davis P."/>
            <person name="Kerhornou A."/>
            <person name="Nie X."/>
            <person name="Hall N."/>
            <person name="Anjard C."/>
            <person name="Hemphill L."/>
            <person name="Bason N."/>
            <person name="Farbrother P."/>
            <person name="Desany B."/>
            <person name="Just E."/>
            <person name="Morio T."/>
            <person name="Rost R."/>
            <person name="Churcher C.M."/>
            <person name="Cooper J."/>
            <person name="Haydock S."/>
            <person name="van Driessche N."/>
            <person name="Cronin A."/>
            <person name="Goodhead I."/>
            <person name="Muzny D.M."/>
            <person name="Mourier T."/>
            <person name="Pain A."/>
            <person name="Lu M."/>
            <person name="Harper D."/>
            <person name="Lindsay R."/>
            <person name="Hauser H."/>
            <person name="James K.D."/>
            <person name="Quiles M."/>
            <person name="Madan Babu M."/>
            <person name="Saito T."/>
            <person name="Buchrieser C."/>
            <person name="Wardroper A."/>
            <person name="Felder M."/>
            <person name="Thangavelu M."/>
            <person name="Johnson D."/>
            <person name="Knights A."/>
            <person name="Loulseged H."/>
            <person name="Mungall K.L."/>
            <person name="Oliver K."/>
            <person name="Price C."/>
            <person name="Quail M.A."/>
            <person name="Urushihara H."/>
            <person name="Hernandez J."/>
            <person name="Rabbinowitsch E."/>
            <person name="Steffen D."/>
            <person name="Sanders M."/>
            <person name="Ma J."/>
            <person name="Kohara Y."/>
            <person name="Sharp S."/>
            <person name="Simmonds M.N."/>
            <person name="Spiegler S."/>
            <person name="Tivey A."/>
            <person name="Sugano S."/>
            <person name="White B."/>
            <person name="Walker D."/>
            <person name="Woodward J.R."/>
            <person name="Winckler T."/>
            <person name="Tanaka Y."/>
            <person name="Shaulsky G."/>
            <person name="Schleicher M."/>
            <person name="Weinstock G.M."/>
            <person name="Rosenthal A."/>
            <person name="Cox E.C."/>
            <person name="Chisholm R.L."/>
            <person name="Gibbs R.A."/>
            <person name="Loomis W.F."/>
            <person name="Platzer M."/>
            <person name="Kay R.R."/>
            <person name="Williams J.G."/>
            <person name="Dear P.H."/>
            <person name="Noegel A.A."/>
            <person name="Barrell B.G."/>
            <person name="Kuspa A."/>
        </authorList>
    </citation>
    <scope>NUCLEOTIDE SEQUENCE [LARGE SCALE GENOMIC DNA]</scope>
    <source>
        <strain>AX4</strain>
    </source>
</reference>
<evidence type="ECO:0000255" key="1"/>
<evidence type="ECO:0000256" key="2">
    <source>
        <dbReference type="SAM" id="MobiDB-lite"/>
    </source>
</evidence>
<evidence type="ECO:0000269" key="3">
    <source>
    </source>
</evidence>
<evidence type="ECO:0000305" key="4"/>
<protein>
    <recommendedName>
        <fullName>Cell surface glycoprotein gp138B</fullName>
    </recommendedName>
</protein>
<gene>
    <name type="primary">GP138B</name>
    <name type="synonym">fusB</name>
    <name type="ORF">DDB_G0290259</name>
</gene>
<sequence>MKIILTLSIFLICFLQLGQSVIDPSQNEVMSDLLFNLYGYDKSLDPCNSNSVECDDINSTSTIKTVISLNLPTPLQEYVITQDLTPLQNLTYMELYEKIYLTLSFFKNINKLTQLETIVTLSFNVTIPDDTIFPASLETFSIYKPSVPLSIAIFGSNIKNLYVNSPLTGYSIPTLINVNPYLENLQLPVTYYSGFPSNISLAFPNLQYLTIYVNNDMDQNNYHNFSISNIGVFKNLKGLDIEFTDSYNPQEFSINSFLSNVPVIDSLYIYGQGVTIDPSVGIIDLSYVKSKKFLSINIQESSLLNNCKGKSFKSPKKAYFRSNYNTFSYACIDFSNLAYFYDYYNEYEQYLPNIDNAPLLNEIYISESVVVGDIPESYCRINYLGLNYNQLNGTAPSCILCLGGNRGGDIVLPNPLLNFNKTSEPYCPTFKIDQNYTNLVATDGIGKLIITGTNLGWYGNDITPITANSKLAITIPKGVGTNKSITVTFQNGEQRTFNYSYVPPFIKSYGFLELDSNKYLTINGTGFDFENPNIITINGQQITFSIALGGGDNDGLIALPIDELPNFDSETKFTVSTLVGGQSSNEVTFYYFNSINITEEKLVLNNTGGSVDINGSFGTNNISLVSISINGTNCLVTSYTNSKLTIQYPSKQVGDNYVLTLNVGGYAVNLVVEYIEGGETPTPSTTPSTTPSTTPSTTPSSTPTQSPGDDGSTSSTLSISFYLITLLLLTQQFI</sequence>
<keyword id="KW-1003">Cell membrane</keyword>
<keyword id="KW-0903">Direct protein sequencing</keyword>
<keyword id="KW-0325">Glycoprotein</keyword>
<keyword id="KW-0336">GPI-anchor</keyword>
<keyword id="KW-0449">Lipoprotein</keyword>
<keyword id="KW-0472">Membrane</keyword>
<keyword id="KW-1185">Reference proteome</keyword>
<keyword id="KW-0677">Repeat</keyword>
<keyword id="KW-0732">Signal</keyword>
<feature type="signal peptide" evidence="3">
    <location>
        <begin position="1"/>
        <end position="20"/>
    </location>
</feature>
<feature type="chain" id="PRO_0000021308" description="Cell surface glycoprotein gp138B">
    <location>
        <begin position="21"/>
        <end position="708"/>
    </location>
</feature>
<feature type="propeptide" id="PRO_0000021309" description="Removed in mature form" evidence="1">
    <location>
        <begin position="709"/>
        <end position="734"/>
    </location>
</feature>
<feature type="domain" description="IPT/TIG">
    <location>
        <begin position="504"/>
        <end position="592"/>
    </location>
</feature>
<feature type="repeat" description="1">
    <location>
        <begin position="683"/>
        <end position="686"/>
    </location>
</feature>
<feature type="repeat" description="2">
    <location>
        <begin position="687"/>
        <end position="690"/>
    </location>
</feature>
<feature type="repeat" description="3">
    <location>
        <begin position="691"/>
        <end position="694"/>
    </location>
</feature>
<feature type="repeat" description="4">
    <location>
        <begin position="695"/>
        <end position="698"/>
    </location>
</feature>
<feature type="region of interest" description="Disordered" evidence="2">
    <location>
        <begin position="678"/>
        <end position="712"/>
    </location>
</feature>
<feature type="region of interest" description="4 X 4 AA tandem repeats of P-S-T-T">
    <location>
        <begin position="683"/>
        <end position="698"/>
    </location>
</feature>
<feature type="compositionally biased region" description="Low complexity" evidence="2">
    <location>
        <begin position="680"/>
        <end position="712"/>
    </location>
</feature>
<feature type="lipid moiety-binding region" description="GPI-like-anchor amidated glycine" evidence="1">
    <location>
        <position position="708"/>
    </location>
</feature>
<feature type="glycosylation site" description="N-linked (GlcNAc...) asparagine" evidence="1">
    <location>
        <position position="58"/>
    </location>
</feature>
<feature type="glycosylation site" description="N-linked (GlcNAc...) asparagine" evidence="1">
    <location>
        <position position="89"/>
    </location>
</feature>
<feature type="glycosylation site" description="N-linked (GlcNAc...) asparagine" evidence="1">
    <location>
        <position position="124"/>
    </location>
</feature>
<feature type="glycosylation site" description="N-linked (GlcNAc...) asparagine" evidence="1">
    <location>
        <position position="198"/>
    </location>
</feature>
<feature type="glycosylation site" description="N-linked (GlcNAc...) asparagine" evidence="1">
    <location>
        <position position="224"/>
    </location>
</feature>
<feature type="glycosylation site" description="N-linked (GlcNAc...) asparagine" evidence="1">
    <location>
        <position position="392"/>
    </location>
</feature>
<feature type="glycosylation site" description="N-linked (GlcNAc...) asparagine" evidence="1">
    <location>
        <position position="420"/>
    </location>
</feature>
<feature type="glycosylation site" description="N-linked (GlcNAc...) asparagine" evidence="1">
    <location>
        <position position="435"/>
    </location>
</feature>
<feature type="glycosylation site" description="N-linked (GlcNAc...) asparagine" evidence="1">
    <location>
        <position position="482"/>
    </location>
</feature>
<feature type="glycosylation site" description="N-linked (GlcNAc...) asparagine" evidence="1">
    <location>
        <position position="498"/>
    </location>
</feature>
<feature type="glycosylation site" description="N-linked (GlcNAc...) asparagine" evidence="1">
    <location>
        <position position="523"/>
    </location>
</feature>
<feature type="glycosylation site" description="N-linked (GlcNAc...) asparagine" evidence="1">
    <location>
        <position position="596"/>
    </location>
</feature>
<feature type="glycosylation site" description="N-linked (GlcNAc...) asparagine" evidence="1">
    <location>
        <position position="605"/>
    </location>
</feature>
<feature type="glycosylation site" description="N-linked (GlcNAc...) asparagine" evidence="1">
    <location>
        <position position="614"/>
    </location>
</feature>
<feature type="glycosylation site" description="N-linked (GlcNAc...) asparagine" evidence="1">
    <location>
        <position position="621"/>
    </location>
</feature>
<feature type="glycosylation site" description="N-linked (GlcNAc...) asparagine" evidence="1">
    <location>
        <position position="630"/>
    </location>
</feature>
<name>G13B_DICDI</name>